<dbReference type="EC" id="4.6.1.17" evidence="1"/>
<dbReference type="EMBL" id="AE016879">
    <property type="protein sequence ID" value="AAP28656.1"/>
    <property type="molecule type" value="Genomic_DNA"/>
</dbReference>
<dbReference type="EMBL" id="AE017334">
    <property type="protein sequence ID" value="AAT34097.1"/>
    <property type="molecule type" value="Genomic_DNA"/>
</dbReference>
<dbReference type="EMBL" id="AE017225">
    <property type="protein sequence ID" value="AAT56915.1"/>
    <property type="molecule type" value="Genomic_DNA"/>
</dbReference>
<dbReference type="RefSeq" id="NP_847170.1">
    <property type="nucleotide sequence ID" value="NC_003997.3"/>
</dbReference>
<dbReference type="RefSeq" id="WP_000094141.1">
    <property type="nucleotide sequence ID" value="NZ_WXXJ01000026.1"/>
</dbReference>
<dbReference type="RefSeq" id="YP_030865.1">
    <property type="nucleotide sequence ID" value="NC_005945.1"/>
</dbReference>
<dbReference type="SMR" id="Q81KM1"/>
<dbReference type="STRING" id="261594.GBAA_4975"/>
<dbReference type="DNASU" id="1086712"/>
<dbReference type="GeneID" id="45024593"/>
<dbReference type="KEGG" id="ban:BA_4975"/>
<dbReference type="KEGG" id="bar:GBAA_4975"/>
<dbReference type="KEGG" id="bat:BAS4619"/>
<dbReference type="PATRIC" id="fig|198094.11.peg.4935"/>
<dbReference type="eggNOG" id="COG0315">
    <property type="taxonomic scope" value="Bacteria"/>
</dbReference>
<dbReference type="HOGENOM" id="CLU_074693_1_1_9"/>
<dbReference type="OMA" id="IWDMVKS"/>
<dbReference type="OrthoDB" id="9794429at2"/>
<dbReference type="UniPathway" id="UPA00344"/>
<dbReference type="Proteomes" id="UP000000427">
    <property type="component" value="Chromosome"/>
</dbReference>
<dbReference type="Proteomes" id="UP000000594">
    <property type="component" value="Chromosome"/>
</dbReference>
<dbReference type="GO" id="GO:0061799">
    <property type="term" value="F:cyclic pyranopterin monophosphate synthase activity"/>
    <property type="evidence" value="ECO:0007669"/>
    <property type="project" value="UniProtKB-UniRule"/>
</dbReference>
<dbReference type="GO" id="GO:0006777">
    <property type="term" value="P:Mo-molybdopterin cofactor biosynthetic process"/>
    <property type="evidence" value="ECO:0007669"/>
    <property type="project" value="UniProtKB-UniRule"/>
</dbReference>
<dbReference type="CDD" id="cd01420">
    <property type="entry name" value="MoaC_PE"/>
    <property type="match status" value="1"/>
</dbReference>
<dbReference type="Gene3D" id="3.30.70.640">
    <property type="entry name" value="Molybdopterin cofactor biosynthesis C (MoaC) domain"/>
    <property type="match status" value="1"/>
</dbReference>
<dbReference type="HAMAP" id="MF_01224_B">
    <property type="entry name" value="MoaC_B"/>
    <property type="match status" value="1"/>
</dbReference>
<dbReference type="InterPro" id="IPR023045">
    <property type="entry name" value="MoaC"/>
</dbReference>
<dbReference type="InterPro" id="IPR047594">
    <property type="entry name" value="MoaC_bact/euk"/>
</dbReference>
<dbReference type="InterPro" id="IPR036522">
    <property type="entry name" value="MoaC_sf"/>
</dbReference>
<dbReference type="InterPro" id="IPR050105">
    <property type="entry name" value="MoCo_biosynth_MoaA/MoaC"/>
</dbReference>
<dbReference type="InterPro" id="IPR002820">
    <property type="entry name" value="Mopterin_CF_biosynth-C_dom"/>
</dbReference>
<dbReference type="NCBIfam" id="TIGR00581">
    <property type="entry name" value="moaC"/>
    <property type="match status" value="1"/>
</dbReference>
<dbReference type="NCBIfam" id="NF006870">
    <property type="entry name" value="PRK09364.1"/>
    <property type="match status" value="1"/>
</dbReference>
<dbReference type="PANTHER" id="PTHR22960:SF29">
    <property type="entry name" value="CYCLIC PYRANOPTERIN MONOPHOSPHATE SYNTHASE"/>
    <property type="match status" value="1"/>
</dbReference>
<dbReference type="PANTHER" id="PTHR22960">
    <property type="entry name" value="MOLYBDOPTERIN COFACTOR SYNTHESIS PROTEIN A"/>
    <property type="match status" value="1"/>
</dbReference>
<dbReference type="Pfam" id="PF01967">
    <property type="entry name" value="MoaC"/>
    <property type="match status" value="1"/>
</dbReference>
<dbReference type="SUPFAM" id="SSF55040">
    <property type="entry name" value="Molybdenum cofactor biosynthesis protein C, MoaC"/>
    <property type="match status" value="1"/>
</dbReference>
<evidence type="ECO:0000255" key="1">
    <source>
        <dbReference type="HAMAP-Rule" id="MF_01224"/>
    </source>
</evidence>
<name>MOAC_BACAN</name>
<organism>
    <name type="scientific">Bacillus anthracis</name>
    <dbReference type="NCBI Taxonomy" id="1392"/>
    <lineage>
        <taxon>Bacteria</taxon>
        <taxon>Bacillati</taxon>
        <taxon>Bacillota</taxon>
        <taxon>Bacilli</taxon>
        <taxon>Bacillales</taxon>
        <taxon>Bacillaceae</taxon>
        <taxon>Bacillus</taxon>
        <taxon>Bacillus cereus group</taxon>
    </lineage>
</organism>
<gene>
    <name evidence="1" type="primary">moaC</name>
    <name type="ordered locus">BA_4975</name>
    <name type="ordered locus">GBAA_4975</name>
    <name type="ordered locus">BAS4619</name>
</gene>
<proteinExistence type="inferred from homology"/>
<comment type="function">
    <text evidence="1">Catalyzes the conversion of (8S)-3',8-cyclo-7,8-dihydroguanosine 5'-triphosphate to cyclic pyranopterin monophosphate (cPMP).</text>
</comment>
<comment type="catalytic activity">
    <reaction evidence="1">
        <text>(8S)-3',8-cyclo-7,8-dihydroguanosine 5'-triphosphate = cyclic pyranopterin phosphate + diphosphate</text>
        <dbReference type="Rhea" id="RHEA:49580"/>
        <dbReference type="ChEBI" id="CHEBI:33019"/>
        <dbReference type="ChEBI" id="CHEBI:59648"/>
        <dbReference type="ChEBI" id="CHEBI:131766"/>
        <dbReference type="EC" id="4.6.1.17"/>
    </reaction>
</comment>
<comment type="pathway">
    <text evidence="1">Cofactor biosynthesis; molybdopterin biosynthesis.</text>
</comment>
<comment type="subunit">
    <text evidence="1">Homohexamer; trimer of dimers.</text>
</comment>
<comment type="similarity">
    <text evidence="1">Belongs to the MoaC family.</text>
</comment>
<keyword id="KW-0456">Lyase</keyword>
<keyword id="KW-0501">Molybdenum cofactor biosynthesis</keyword>
<keyword id="KW-1185">Reference proteome</keyword>
<protein>
    <recommendedName>
        <fullName evidence="1">Cyclic pyranopterin monophosphate synthase</fullName>
        <ecNumber evidence="1">4.6.1.17</ecNumber>
    </recommendedName>
    <alternativeName>
        <fullName evidence="1">Molybdenum cofactor biosynthesis protein C</fullName>
    </alternativeName>
</protein>
<reference key="1">
    <citation type="journal article" date="2003" name="Nature">
        <title>The genome sequence of Bacillus anthracis Ames and comparison to closely related bacteria.</title>
        <authorList>
            <person name="Read T.D."/>
            <person name="Peterson S.N."/>
            <person name="Tourasse N.J."/>
            <person name="Baillie L.W."/>
            <person name="Paulsen I.T."/>
            <person name="Nelson K.E."/>
            <person name="Tettelin H."/>
            <person name="Fouts D.E."/>
            <person name="Eisen J.A."/>
            <person name="Gill S.R."/>
            <person name="Holtzapple E.K."/>
            <person name="Okstad O.A."/>
            <person name="Helgason E."/>
            <person name="Rilstone J."/>
            <person name="Wu M."/>
            <person name="Kolonay J.F."/>
            <person name="Beanan M.J."/>
            <person name="Dodson R.J."/>
            <person name="Brinkac L.M."/>
            <person name="Gwinn M.L."/>
            <person name="DeBoy R.T."/>
            <person name="Madpu R."/>
            <person name="Daugherty S.C."/>
            <person name="Durkin A.S."/>
            <person name="Haft D.H."/>
            <person name="Nelson W.C."/>
            <person name="Peterson J.D."/>
            <person name="Pop M."/>
            <person name="Khouri H.M."/>
            <person name="Radune D."/>
            <person name="Benton J.L."/>
            <person name="Mahamoud Y."/>
            <person name="Jiang L."/>
            <person name="Hance I.R."/>
            <person name="Weidman J.F."/>
            <person name="Berry K.J."/>
            <person name="Plaut R.D."/>
            <person name="Wolf A.M."/>
            <person name="Watkins K.L."/>
            <person name="Nierman W.C."/>
            <person name="Hazen A."/>
            <person name="Cline R.T."/>
            <person name="Redmond C."/>
            <person name="Thwaite J.E."/>
            <person name="White O."/>
            <person name="Salzberg S.L."/>
            <person name="Thomason B."/>
            <person name="Friedlander A.M."/>
            <person name="Koehler T.M."/>
            <person name="Hanna P.C."/>
            <person name="Kolstoe A.-B."/>
            <person name="Fraser C.M."/>
        </authorList>
    </citation>
    <scope>NUCLEOTIDE SEQUENCE [LARGE SCALE GENOMIC DNA]</scope>
    <source>
        <strain>Ames / isolate Porton</strain>
    </source>
</reference>
<reference key="2">
    <citation type="submission" date="2004-01" db="EMBL/GenBank/DDBJ databases">
        <title>Complete genome sequence of Bacillus anthracis Sterne.</title>
        <authorList>
            <person name="Brettin T.S."/>
            <person name="Bruce D."/>
            <person name="Challacombe J.F."/>
            <person name="Gilna P."/>
            <person name="Han C."/>
            <person name="Hill K."/>
            <person name="Hitchcock P."/>
            <person name="Jackson P."/>
            <person name="Keim P."/>
            <person name="Longmire J."/>
            <person name="Lucas S."/>
            <person name="Okinaka R."/>
            <person name="Richardson P."/>
            <person name="Rubin E."/>
            <person name="Tice H."/>
        </authorList>
    </citation>
    <scope>NUCLEOTIDE SEQUENCE [LARGE SCALE GENOMIC DNA]</scope>
    <source>
        <strain>Sterne</strain>
    </source>
</reference>
<reference key="3">
    <citation type="journal article" date="2009" name="J. Bacteriol.">
        <title>The complete genome sequence of Bacillus anthracis Ames 'Ancestor'.</title>
        <authorList>
            <person name="Ravel J."/>
            <person name="Jiang L."/>
            <person name="Stanley S.T."/>
            <person name="Wilson M.R."/>
            <person name="Decker R.S."/>
            <person name="Read T.D."/>
            <person name="Worsham P."/>
            <person name="Keim P.S."/>
            <person name="Salzberg S.L."/>
            <person name="Fraser-Liggett C.M."/>
            <person name="Rasko D.A."/>
        </authorList>
    </citation>
    <scope>NUCLEOTIDE SEQUENCE [LARGE SCALE GENOMIC DNA]</scope>
    <source>
        <strain>Ames ancestor</strain>
    </source>
</reference>
<sequence>MSSFTHFNDQGRAKMVDISDKKATVRTAIACSSIVVTKEIYDKISHNEIGKGDVLAVAQIAGIMAAKRTSDIIPMCHPLLLKGVDVSFDWKQSDEQYRLLIEVKVKTEGSTGVEMEALTAASATALTVYDMCKAVDKGMIIGETYLLEKTGGKSGDYTRKS</sequence>
<accession>Q81KM1</accession>
<accession>Q6HS23</accession>
<accession>Q6KLC7</accession>
<feature type="chain" id="PRO_1000054065" description="Cyclic pyranopterin monophosphate synthase">
    <location>
        <begin position="1"/>
        <end position="161"/>
    </location>
</feature>
<feature type="active site" evidence="1">
    <location>
        <position position="130"/>
    </location>
</feature>
<feature type="binding site" evidence="1">
    <location>
        <begin position="75"/>
        <end position="77"/>
    </location>
    <ligand>
        <name>substrate</name>
    </ligand>
</feature>
<feature type="binding site" evidence="1">
    <location>
        <begin position="115"/>
        <end position="116"/>
    </location>
    <ligand>
        <name>substrate</name>
    </ligand>
</feature>